<gene>
    <name evidence="1" type="primary">aspS</name>
    <name type="ordered locus">Cyan7425_0961</name>
</gene>
<comment type="function">
    <text evidence="1">Aspartyl-tRNA synthetase with relaxed tRNA specificity since it is able to aspartylate not only its cognate tRNA(Asp) but also tRNA(Asn). Reaction proceeds in two steps: L-aspartate is first activated by ATP to form Asp-AMP and then transferred to the acceptor end of tRNA(Asp/Asn).</text>
</comment>
<comment type="catalytic activity">
    <reaction evidence="1">
        <text>tRNA(Asx) + L-aspartate + ATP = L-aspartyl-tRNA(Asx) + AMP + diphosphate</text>
        <dbReference type="Rhea" id="RHEA:18349"/>
        <dbReference type="Rhea" id="RHEA-COMP:9710"/>
        <dbReference type="Rhea" id="RHEA-COMP:9711"/>
        <dbReference type="ChEBI" id="CHEBI:29991"/>
        <dbReference type="ChEBI" id="CHEBI:30616"/>
        <dbReference type="ChEBI" id="CHEBI:33019"/>
        <dbReference type="ChEBI" id="CHEBI:78442"/>
        <dbReference type="ChEBI" id="CHEBI:78516"/>
        <dbReference type="ChEBI" id="CHEBI:456215"/>
        <dbReference type="EC" id="6.1.1.23"/>
    </reaction>
</comment>
<comment type="subunit">
    <text evidence="1">Homodimer.</text>
</comment>
<comment type="subcellular location">
    <subcellularLocation>
        <location evidence="1">Cytoplasm</location>
    </subcellularLocation>
</comment>
<comment type="similarity">
    <text evidence="1">Belongs to the class-II aminoacyl-tRNA synthetase family. Type 1 subfamily.</text>
</comment>
<organism>
    <name type="scientific">Cyanothece sp. (strain PCC 7425 / ATCC 29141)</name>
    <dbReference type="NCBI Taxonomy" id="395961"/>
    <lineage>
        <taxon>Bacteria</taxon>
        <taxon>Bacillati</taxon>
        <taxon>Cyanobacteriota</taxon>
        <taxon>Cyanophyceae</taxon>
        <taxon>Gomontiellales</taxon>
        <taxon>Cyanothecaceae</taxon>
        <taxon>Cyanothece</taxon>
    </lineage>
</organism>
<accession>B8HXQ8</accession>
<proteinExistence type="inferred from homology"/>
<reference key="1">
    <citation type="journal article" date="2011" name="MBio">
        <title>Novel metabolic attributes of the genus Cyanothece, comprising a group of unicellular nitrogen-fixing Cyanobacteria.</title>
        <authorList>
            <person name="Bandyopadhyay A."/>
            <person name="Elvitigala T."/>
            <person name="Welsh E."/>
            <person name="Stockel J."/>
            <person name="Liberton M."/>
            <person name="Min H."/>
            <person name="Sherman L.A."/>
            <person name="Pakrasi H.B."/>
        </authorList>
    </citation>
    <scope>NUCLEOTIDE SEQUENCE [LARGE SCALE GENOMIC DNA]</scope>
    <source>
        <strain>PCC 7425 / ATCC 29141</strain>
    </source>
</reference>
<keyword id="KW-0030">Aminoacyl-tRNA synthetase</keyword>
<keyword id="KW-0067">ATP-binding</keyword>
<keyword id="KW-0963">Cytoplasm</keyword>
<keyword id="KW-0436">Ligase</keyword>
<keyword id="KW-0547">Nucleotide-binding</keyword>
<keyword id="KW-0648">Protein biosynthesis</keyword>
<protein>
    <recommendedName>
        <fullName evidence="1">Aspartate--tRNA(Asp/Asn) ligase</fullName>
        <ecNumber evidence="1">6.1.1.23</ecNumber>
    </recommendedName>
    <alternativeName>
        <fullName evidence="1">Aspartyl-tRNA synthetase</fullName>
        <shortName evidence="1">AspRS</shortName>
    </alternativeName>
    <alternativeName>
        <fullName evidence="1">Non-discriminating aspartyl-tRNA synthetase</fullName>
        <shortName evidence="1">ND-AspRS</shortName>
    </alternativeName>
</protein>
<sequence length="597" mass="67345">MRTHYCGDVRSHDVGTTVTLFGWVDRRRDHGGVIFLDLRDRSGVVQIVSDPERTPNSYAKAEQLRNEYVVKVTGRVSARPEESLNPRLPTGEVEIYADQIELLNAVRKQLPFQVSTTESESVREDLRLKYRYLDLRRETMAANLQLRHQVVKAMRRYLEDEQNFVEIETPVLTRSTPEGARDYLVPSRVNPGEWFALPQSPQLFKQLLMVAGYDRYYQIARCFRDEDLRADRQPEFTQLDMEMSFMSQEEILELNEALVCHIFKQVKGIELPRPFPRLTYAEAMDRYGSDKPDTRFGLELVNVSDLMKDSGFKVFSGAVASGGLVKVLPIPNGNDLISNVRIKPGGDLFKEATDAGAKGLAYIRVREGGEIDTIGAIKDNLTEAQKAELLQRTGAKPGHLLLFGAGTAAIVNKTLDRLRQVLGRELNLIDPAKINLLWIVEFPMFEWNADEKRLEALHHPFTAPYPEDVQDLKTAQAQAYDLVYNGFEVGGGSLRIYQTELQKQVFETIGLSPEEAQNKFGFLLEAFEYGTPPHGGIAYGLDRLVMLLAGEESIRDVIAFPKTQQARCLLTSAPAEVDLRQLKELHVASTSQPKVNG</sequence>
<evidence type="ECO:0000255" key="1">
    <source>
        <dbReference type="HAMAP-Rule" id="MF_00044"/>
    </source>
</evidence>
<feature type="chain" id="PRO_1000198976" description="Aspartate--tRNA(Asp/Asn) ligase">
    <location>
        <begin position="1"/>
        <end position="597"/>
    </location>
</feature>
<feature type="region of interest" description="Aspartate" evidence="1">
    <location>
        <begin position="202"/>
        <end position="205"/>
    </location>
</feature>
<feature type="binding site" evidence="1">
    <location>
        <position position="178"/>
    </location>
    <ligand>
        <name>L-aspartate</name>
        <dbReference type="ChEBI" id="CHEBI:29991"/>
    </ligand>
</feature>
<feature type="binding site" evidence="1">
    <location>
        <begin position="224"/>
        <end position="226"/>
    </location>
    <ligand>
        <name>ATP</name>
        <dbReference type="ChEBI" id="CHEBI:30616"/>
    </ligand>
</feature>
<feature type="binding site" evidence="1">
    <location>
        <position position="224"/>
    </location>
    <ligand>
        <name>L-aspartate</name>
        <dbReference type="ChEBI" id="CHEBI:29991"/>
    </ligand>
</feature>
<feature type="binding site" evidence="1">
    <location>
        <position position="233"/>
    </location>
    <ligand>
        <name>ATP</name>
        <dbReference type="ChEBI" id="CHEBI:30616"/>
    </ligand>
</feature>
<feature type="binding site" evidence="1">
    <location>
        <position position="458"/>
    </location>
    <ligand>
        <name>L-aspartate</name>
        <dbReference type="ChEBI" id="CHEBI:29991"/>
    </ligand>
</feature>
<feature type="binding site" evidence="1">
    <location>
        <position position="488"/>
    </location>
    <ligand>
        <name>ATP</name>
        <dbReference type="ChEBI" id="CHEBI:30616"/>
    </ligand>
</feature>
<feature type="binding site" evidence="1">
    <location>
        <position position="495"/>
    </location>
    <ligand>
        <name>L-aspartate</name>
        <dbReference type="ChEBI" id="CHEBI:29991"/>
    </ligand>
</feature>
<feature type="binding site" evidence="1">
    <location>
        <begin position="540"/>
        <end position="543"/>
    </location>
    <ligand>
        <name>ATP</name>
        <dbReference type="ChEBI" id="CHEBI:30616"/>
    </ligand>
</feature>
<feature type="site" description="Important for tRNA non-discrimination" evidence="1">
    <location>
        <position position="30"/>
    </location>
</feature>
<dbReference type="EC" id="6.1.1.23" evidence="1"/>
<dbReference type="EMBL" id="CP001344">
    <property type="protein sequence ID" value="ACL43347.1"/>
    <property type="molecule type" value="Genomic_DNA"/>
</dbReference>
<dbReference type="SMR" id="B8HXQ8"/>
<dbReference type="STRING" id="395961.Cyan7425_0961"/>
<dbReference type="KEGG" id="cyn:Cyan7425_0961"/>
<dbReference type="eggNOG" id="COG0173">
    <property type="taxonomic scope" value="Bacteria"/>
</dbReference>
<dbReference type="HOGENOM" id="CLU_014330_3_2_3"/>
<dbReference type="OrthoDB" id="9802326at2"/>
<dbReference type="GO" id="GO:0005737">
    <property type="term" value="C:cytoplasm"/>
    <property type="evidence" value="ECO:0007669"/>
    <property type="project" value="UniProtKB-SubCell"/>
</dbReference>
<dbReference type="GO" id="GO:0004815">
    <property type="term" value="F:aspartate-tRNA ligase activity"/>
    <property type="evidence" value="ECO:0007669"/>
    <property type="project" value="UniProtKB-UniRule"/>
</dbReference>
<dbReference type="GO" id="GO:0050560">
    <property type="term" value="F:aspartate-tRNA(Asn) ligase activity"/>
    <property type="evidence" value="ECO:0007669"/>
    <property type="project" value="UniProtKB-EC"/>
</dbReference>
<dbReference type="GO" id="GO:0005524">
    <property type="term" value="F:ATP binding"/>
    <property type="evidence" value="ECO:0007669"/>
    <property type="project" value="UniProtKB-UniRule"/>
</dbReference>
<dbReference type="GO" id="GO:0003676">
    <property type="term" value="F:nucleic acid binding"/>
    <property type="evidence" value="ECO:0007669"/>
    <property type="project" value="InterPro"/>
</dbReference>
<dbReference type="GO" id="GO:0006422">
    <property type="term" value="P:aspartyl-tRNA aminoacylation"/>
    <property type="evidence" value="ECO:0007669"/>
    <property type="project" value="UniProtKB-UniRule"/>
</dbReference>
<dbReference type="CDD" id="cd00777">
    <property type="entry name" value="AspRS_core"/>
    <property type="match status" value="1"/>
</dbReference>
<dbReference type="CDD" id="cd04317">
    <property type="entry name" value="EcAspRS_like_N"/>
    <property type="match status" value="1"/>
</dbReference>
<dbReference type="Gene3D" id="3.30.930.10">
    <property type="entry name" value="Bira Bifunctional Protein, Domain 2"/>
    <property type="match status" value="1"/>
</dbReference>
<dbReference type="Gene3D" id="3.30.1360.30">
    <property type="entry name" value="GAD-like domain"/>
    <property type="match status" value="1"/>
</dbReference>
<dbReference type="Gene3D" id="2.40.50.140">
    <property type="entry name" value="Nucleic acid-binding proteins"/>
    <property type="match status" value="1"/>
</dbReference>
<dbReference type="HAMAP" id="MF_00044">
    <property type="entry name" value="Asp_tRNA_synth_type1"/>
    <property type="match status" value="1"/>
</dbReference>
<dbReference type="InterPro" id="IPR004364">
    <property type="entry name" value="Aa-tRNA-synt_II"/>
</dbReference>
<dbReference type="InterPro" id="IPR006195">
    <property type="entry name" value="aa-tRNA-synth_II"/>
</dbReference>
<dbReference type="InterPro" id="IPR045864">
    <property type="entry name" value="aa-tRNA-synth_II/BPL/LPL"/>
</dbReference>
<dbReference type="InterPro" id="IPR004524">
    <property type="entry name" value="Asp-tRNA-ligase_1"/>
</dbReference>
<dbReference type="InterPro" id="IPR047089">
    <property type="entry name" value="Asp-tRNA-ligase_1_N"/>
</dbReference>
<dbReference type="InterPro" id="IPR002312">
    <property type="entry name" value="Asp/Asn-tRNA-synth_IIb"/>
</dbReference>
<dbReference type="InterPro" id="IPR047090">
    <property type="entry name" value="AspRS_core"/>
</dbReference>
<dbReference type="InterPro" id="IPR004115">
    <property type="entry name" value="GAD-like_sf"/>
</dbReference>
<dbReference type="InterPro" id="IPR029351">
    <property type="entry name" value="GAD_dom"/>
</dbReference>
<dbReference type="InterPro" id="IPR012340">
    <property type="entry name" value="NA-bd_OB-fold"/>
</dbReference>
<dbReference type="InterPro" id="IPR004365">
    <property type="entry name" value="NA-bd_OB_tRNA"/>
</dbReference>
<dbReference type="NCBIfam" id="TIGR00459">
    <property type="entry name" value="aspS_bact"/>
    <property type="match status" value="1"/>
</dbReference>
<dbReference type="NCBIfam" id="NF001750">
    <property type="entry name" value="PRK00476.1"/>
    <property type="match status" value="1"/>
</dbReference>
<dbReference type="PANTHER" id="PTHR22594:SF5">
    <property type="entry name" value="ASPARTATE--TRNA LIGASE, MITOCHONDRIAL"/>
    <property type="match status" value="1"/>
</dbReference>
<dbReference type="PANTHER" id="PTHR22594">
    <property type="entry name" value="ASPARTYL/LYSYL-TRNA SYNTHETASE"/>
    <property type="match status" value="1"/>
</dbReference>
<dbReference type="Pfam" id="PF02938">
    <property type="entry name" value="GAD"/>
    <property type="match status" value="1"/>
</dbReference>
<dbReference type="Pfam" id="PF00152">
    <property type="entry name" value="tRNA-synt_2"/>
    <property type="match status" value="1"/>
</dbReference>
<dbReference type="Pfam" id="PF01336">
    <property type="entry name" value="tRNA_anti-codon"/>
    <property type="match status" value="1"/>
</dbReference>
<dbReference type="PRINTS" id="PR01042">
    <property type="entry name" value="TRNASYNTHASP"/>
</dbReference>
<dbReference type="SUPFAM" id="SSF55681">
    <property type="entry name" value="Class II aaRS and biotin synthetases"/>
    <property type="match status" value="1"/>
</dbReference>
<dbReference type="SUPFAM" id="SSF55261">
    <property type="entry name" value="GAD domain-like"/>
    <property type="match status" value="1"/>
</dbReference>
<dbReference type="SUPFAM" id="SSF50249">
    <property type="entry name" value="Nucleic acid-binding proteins"/>
    <property type="match status" value="1"/>
</dbReference>
<dbReference type="PROSITE" id="PS50862">
    <property type="entry name" value="AA_TRNA_LIGASE_II"/>
    <property type="match status" value="1"/>
</dbReference>
<name>SYDND_CYAP4</name>